<comment type="tissue specificity">
    <text>Calcified shell.</text>
</comment>
<comment type="mass spectrometry" mass="4625.3" method="Plasma desorption" evidence="1"/>
<name>CUPC8_CANPG</name>
<proteinExistence type="evidence at protein level"/>
<protein>
    <recommendedName>
        <fullName>Cuticle protein CP463</fullName>
        <shortName>CPCP463</shortName>
    </recommendedName>
</protein>
<keyword id="KW-0193">Cuticle</keyword>
<keyword id="KW-0903">Direct protein sequencing</keyword>
<keyword id="KW-0677">Repeat</keyword>
<organism>
    <name type="scientific">Cancer pagurus</name>
    <name type="common">Rock crab</name>
    <dbReference type="NCBI Taxonomy" id="6755"/>
    <lineage>
        <taxon>Eukaryota</taxon>
        <taxon>Metazoa</taxon>
        <taxon>Ecdysozoa</taxon>
        <taxon>Arthropoda</taxon>
        <taxon>Crustacea</taxon>
        <taxon>Multicrustacea</taxon>
        <taxon>Malacostraca</taxon>
        <taxon>Eumalacostraca</taxon>
        <taxon>Eucarida</taxon>
        <taxon>Decapoda</taxon>
        <taxon>Pleocyemata</taxon>
        <taxon>Brachyura</taxon>
        <taxon>Eubrachyura</taxon>
        <taxon>Cancroidea</taxon>
        <taxon>Cancridae</taxon>
        <taxon>Cancer</taxon>
    </lineage>
</organism>
<evidence type="ECO:0000269" key="1">
    <source>
    </source>
</evidence>
<accession>P81587</accession>
<sequence length="44" mass="4626">EVLLEGPSGVLFKDGQKKYLPPGVKIVLLSKAGAVLSNGDNVQF</sequence>
<reference key="1">
    <citation type="journal article" date="1999" name="Comp. Biochem. Physiol.">
        <title>Exoskeletal proteins from the crab, Cancer pagurus.</title>
        <authorList>
            <person name="Andersen S.O."/>
        </authorList>
    </citation>
    <scope>PROTEIN SEQUENCE</scope>
    <scope>MASS SPECTROMETRY</scope>
    <source>
        <tissue>Carapace cuticle</tissue>
    </source>
</reference>
<feature type="chain" id="PRO_0000196168" description="Cuticle protein CP463">
    <location>
        <begin position="1"/>
        <end position="44"/>
    </location>
</feature>
<feature type="repeat" description="1">
    <location>
        <begin position="3"/>
        <end position="20"/>
    </location>
</feature>
<feature type="repeat" description="2">
    <location>
        <begin position="27"/>
        <end position="44"/>
    </location>
</feature>
<dbReference type="SMR" id="P81587"/>
<dbReference type="GO" id="GO:0042302">
    <property type="term" value="F:structural constituent of cuticle"/>
    <property type="evidence" value="ECO:0007669"/>
    <property type="project" value="UniProtKB-KW"/>
</dbReference>
<dbReference type="InterPro" id="IPR012539">
    <property type="entry name" value="Cuticle_1"/>
</dbReference>
<dbReference type="Pfam" id="PF08140">
    <property type="entry name" value="Cuticle_1"/>
    <property type="match status" value="1"/>
</dbReference>